<dbReference type="EMBL" id="BC121414">
    <property type="protein sequence ID" value="AAI21415.1"/>
    <property type="molecule type" value="mRNA"/>
</dbReference>
<dbReference type="RefSeq" id="NP_001072334.1">
    <property type="nucleotide sequence ID" value="NM_001078866.1"/>
</dbReference>
<dbReference type="RefSeq" id="XP_012820628.1">
    <property type="nucleotide sequence ID" value="XM_012965174.2"/>
</dbReference>
<dbReference type="SMR" id="Q0V9S3"/>
<dbReference type="FunCoup" id="Q0V9S3">
    <property type="interactions" value="505"/>
</dbReference>
<dbReference type="STRING" id="8364.ENSXETP00000007751"/>
<dbReference type="DNASU" id="779787"/>
<dbReference type="GeneID" id="779787"/>
<dbReference type="KEGG" id="xtr:779787"/>
<dbReference type="AGR" id="Xenbase:XB-GENE-5882041"/>
<dbReference type="CTD" id="9811"/>
<dbReference type="Xenbase" id="XB-GENE-5882041">
    <property type="gene designation" value="ctif"/>
</dbReference>
<dbReference type="InParanoid" id="Q0V9S3"/>
<dbReference type="OMA" id="HISQWTT"/>
<dbReference type="OrthoDB" id="6484979at2759"/>
<dbReference type="Proteomes" id="UP000008143">
    <property type="component" value="Chromosome 1"/>
</dbReference>
<dbReference type="Bgee" id="ENSXETG00000026836">
    <property type="expression patterns" value="Expressed in skeletal muscle tissue and 12 other cell types or tissues"/>
</dbReference>
<dbReference type="GO" id="GO:0048471">
    <property type="term" value="C:perinuclear region of cytoplasm"/>
    <property type="evidence" value="ECO:0000250"/>
    <property type="project" value="UniProtKB"/>
</dbReference>
<dbReference type="GO" id="GO:0003723">
    <property type="term" value="F:RNA binding"/>
    <property type="evidence" value="ECO:0007669"/>
    <property type="project" value="InterPro"/>
</dbReference>
<dbReference type="GO" id="GO:0000184">
    <property type="term" value="P:nuclear-transcribed mRNA catabolic process, nonsense-mediated decay"/>
    <property type="evidence" value="ECO:0000250"/>
    <property type="project" value="UniProtKB"/>
</dbReference>
<dbReference type="GO" id="GO:0006446">
    <property type="term" value="P:regulation of translational initiation"/>
    <property type="evidence" value="ECO:0000250"/>
    <property type="project" value="UniProtKB"/>
</dbReference>
<dbReference type="FunFam" id="1.25.40.180:FF:000019">
    <property type="entry name" value="CBP80/20-dependent translation initiation factor isoform X2"/>
    <property type="match status" value="1"/>
</dbReference>
<dbReference type="Gene3D" id="1.25.40.180">
    <property type="match status" value="1"/>
</dbReference>
<dbReference type="InterPro" id="IPR016024">
    <property type="entry name" value="ARM-type_fold"/>
</dbReference>
<dbReference type="InterPro" id="IPR003890">
    <property type="entry name" value="MIF4G-like_typ-3"/>
</dbReference>
<dbReference type="InterPro" id="IPR051367">
    <property type="entry name" value="mRNA_TranslReg/HistoneTransl"/>
</dbReference>
<dbReference type="PANTHER" id="PTHR23254:SF16">
    <property type="entry name" value="CBP80_20-DEPENDENT TRANSLATION INITIATION FACTOR"/>
    <property type="match status" value="1"/>
</dbReference>
<dbReference type="PANTHER" id="PTHR23254">
    <property type="entry name" value="EIF4G DOMAIN PROTEIN"/>
    <property type="match status" value="1"/>
</dbReference>
<dbReference type="Pfam" id="PF02854">
    <property type="entry name" value="MIF4G"/>
    <property type="match status" value="1"/>
</dbReference>
<dbReference type="SMART" id="SM00543">
    <property type="entry name" value="MIF4G"/>
    <property type="match status" value="1"/>
</dbReference>
<dbReference type="SUPFAM" id="SSF48371">
    <property type="entry name" value="ARM repeat"/>
    <property type="match status" value="1"/>
</dbReference>
<organism>
    <name type="scientific">Xenopus tropicalis</name>
    <name type="common">Western clawed frog</name>
    <name type="synonym">Silurana tropicalis</name>
    <dbReference type="NCBI Taxonomy" id="8364"/>
    <lineage>
        <taxon>Eukaryota</taxon>
        <taxon>Metazoa</taxon>
        <taxon>Chordata</taxon>
        <taxon>Craniata</taxon>
        <taxon>Vertebrata</taxon>
        <taxon>Euteleostomi</taxon>
        <taxon>Amphibia</taxon>
        <taxon>Batrachia</taxon>
        <taxon>Anura</taxon>
        <taxon>Pipoidea</taxon>
        <taxon>Pipidae</taxon>
        <taxon>Xenopodinae</taxon>
        <taxon>Xenopus</taxon>
        <taxon>Silurana</taxon>
    </lineage>
</organism>
<feature type="chain" id="PRO_0000385189" description="CBP80/20-dependent translation initiation factor">
    <location>
        <begin position="1"/>
        <end position="583"/>
    </location>
</feature>
<feature type="domain" description="MIF4G">
    <location>
        <begin position="361"/>
        <end position="562"/>
    </location>
</feature>
<feature type="region of interest" description="Disordered" evidence="2">
    <location>
        <begin position="42"/>
        <end position="95"/>
    </location>
</feature>
<feature type="region of interest" description="Disordered" evidence="2">
    <location>
        <begin position="129"/>
        <end position="154"/>
    </location>
</feature>
<feature type="region of interest" description="Disordered" evidence="2">
    <location>
        <begin position="190"/>
        <end position="251"/>
    </location>
</feature>
<feature type="region of interest" description="Disordered" evidence="2">
    <location>
        <begin position="294"/>
        <end position="325"/>
    </location>
</feature>
<feature type="compositionally biased region" description="Basic and acidic residues" evidence="2">
    <location>
        <begin position="43"/>
        <end position="53"/>
    </location>
</feature>
<feature type="compositionally biased region" description="Polar residues" evidence="2">
    <location>
        <begin position="54"/>
        <end position="63"/>
    </location>
</feature>
<feature type="compositionally biased region" description="Basic and acidic residues" evidence="2">
    <location>
        <begin position="65"/>
        <end position="80"/>
    </location>
</feature>
<feature type="compositionally biased region" description="Basic and acidic residues" evidence="2">
    <location>
        <begin position="141"/>
        <end position="154"/>
    </location>
</feature>
<feature type="compositionally biased region" description="Basic residues" evidence="2">
    <location>
        <begin position="190"/>
        <end position="199"/>
    </location>
</feature>
<feature type="compositionally biased region" description="Low complexity" evidence="2">
    <location>
        <begin position="200"/>
        <end position="213"/>
    </location>
</feature>
<feature type="compositionally biased region" description="Basic and acidic residues" evidence="2">
    <location>
        <begin position="298"/>
        <end position="324"/>
    </location>
</feature>
<protein>
    <recommendedName>
        <fullName>CBP80/20-dependent translation initiation factor</fullName>
    </recommendedName>
</protein>
<accession>Q0V9S3</accession>
<keyword id="KW-0963">Cytoplasm</keyword>
<keyword id="KW-0866">Nonsense-mediated mRNA decay</keyword>
<keyword id="KW-1185">Reference proteome</keyword>
<keyword id="KW-0810">Translation regulation</keyword>
<proteinExistence type="evidence at transcript level"/>
<name>CTIF_XENTR</name>
<comment type="function">
    <text evidence="1">Specifically required for the pioneer round of mRNA translation mediated by the cap-binding complex (CBC), that takes place during or right after mRNA export via the nuclear pore complex (NPC). In contrast, it is not involved in steady state translation, that takes place when the CBC complex is replaced by cytoplasmic cap-binding protein eIF4E. Also required for nonsense-mediated mRNA decay (NMD), the pioneer round of mRNA translation mediated by the cap-binding complex playing a central role in nonsense-mediated mRNA decay (NMD) (By similarity).</text>
</comment>
<comment type="subcellular location">
    <subcellularLocation>
        <location evidence="1">Cytoplasm</location>
        <location evidence="1">Perinuclear region</location>
    </subcellularLocation>
</comment>
<comment type="similarity">
    <text evidence="3">Belongs to the CTIF family.</text>
</comment>
<gene>
    <name type="primary">ctif</name>
</gene>
<sequence length="583" mass="66640">MESSSVASASSEAGSSRSLEIEELERFIDSYVLEYQVQGLLTDKTEGDGESDKTQSNVSQWTVECTERLEENRTSPRNREPTYSQNGNKEGPLDMLGTDIWAASTVESISGATWDLQPEKLDFTQLQLRQRNSPKHPPPQIDRDGFGKGKRVEGDDINLNDIEKVLPTWQGYSPLPHEADIAQTKKLFRRKRNDRRKQQKPQGGNKQPPSQQNDHQPATAKHNSREHQRQYHGNPPPPHPSGKQGHHGYSQNRRWHHNQKHLPNDLQRNAKETDTLKIEDASVCTVHIPLDIHSNTDSTERHCPPANDSEAKRKESIQSRDRPKISLLQSSKDRLRRRLKEKEDVAVESTNPQKTKMDKLIEILNSMRNNSSDVDYKLTTFMAEAQNSANSEEMLGEIVKTIYQKAVTDRSFAHTAAKLCDRMALFMVEGTKFRSLLLNMLQKDFSIREEMHRSDVERWLGFITFLCEVFGTMRSNMAEPFRVLVCPIYTCLRELLQSEDVKEDAVLCCSMELQSAGRLLEDQLPEMMSELLATARDKMLCPSESMLTRSLLLEVIELHANSWNPLTPTITQYYNKTIQKLTG</sequence>
<reference key="1">
    <citation type="submission" date="2006-08" db="EMBL/GenBank/DDBJ databases">
        <authorList>
            <consortium name="NIH - Xenopus Gene Collection (XGC) project"/>
        </authorList>
    </citation>
    <scope>NUCLEOTIDE SEQUENCE [LARGE SCALE MRNA]</scope>
    <source>
        <tissue>Testis</tissue>
    </source>
</reference>
<evidence type="ECO:0000250" key="1"/>
<evidence type="ECO:0000256" key="2">
    <source>
        <dbReference type="SAM" id="MobiDB-lite"/>
    </source>
</evidence>
<evidence type="ECO:0000305" key="3"/>